<comment type="subunit">
    <text evidence="1">Homodimer and heterodimers.</text>
</comment>
<comment type="subcellular location">
    <subcellularLocation>
        <location evidence="1">Cell membrane</location>
        <topology evidence="1">Multi-pass membrane protein</topology>
    </subcellularLocation>
</comment>
<comment type="similarity">
    <text evidence="3">Belongs to the Casparian strip membrane proteins (CASP) family.</text>
</comment>
<dbReference type="EMBL" id="GL377604">
    <property type="protein sequence ID" value="EFJ19909.1"/>
    <property type="molecule type" value="Genomic_DNA"/>
</dbReference>
<dbReference type="RefSeq" id="XP_002978952.1">
    <property type="nucleotide sequence ID" value="XM_002978906.1"/>
</dbReference>
<dbReference type="EnsemblPlants" id="EFJ19909">
    <property type="protein sequence ID" value="EFJ19909"/>
    <property type="gene ID" value="SELMODRAFT_418756"/>
</dbReference>
<dbReference type="Gramene" id="EFJ19909">
    <property type="protein sequence ID" value="EFJ19909"/>
    <property type="gene ID" value="SELMODRAFT_418756"/>
</dbReference>
<dbReference type="KEGG" id="smo:SELMODRAFT_418756"/>
<dbReference type="HOGENOM" id="CLU_938112_0_0_1"/>
<dbReference type="InParanoid" id="D8S6A8"/>
<dbReference type="Proteomes" id="UP000001514">
    <property type="component" value="Unassembled WGS sequence"/>
</dbReference>
<dbReference type="GO" id="GO:0005886">
    <property type="term" value="C:plasma membrane"/>
    <property type="evidence" value="ECO:0007669"/>
    <property type="project" value="UniProtKB-SubCell"/>
</dbReference>
<dbReference type="InterPro" id="IPR006459">
    <property type="entry name" value="CASP/CASPL"/>
</dbReference>
<dbReference type="InterPro" id="IPR006702">
    <property type="entry name" value="CASP_dom"/>
</dbReference>
<dbReference type="NCBIfam" id="TIGR01569">
    <property type="entry name" value="A_tha_TIGR01569"/>
    <property type="match status" value="1"/>
</dbReference>
<dbReference type="PANTHER" id="PTHR33573:SF30">
    <property type="entry name" value="CASP-LIKE PROTEIN 2C1-RELATED"/>
    <property type="match status" value="1"/>
</dbReference>
<dbReference type="PANTHER" id="PTHR33573">
    <property type="entry name" value="CASP-LIKE PROTEIN 4A4"/>
    <property type="match status" value="1"/>
</dbReference>
<dbReference type="Pfam" id="PF04535">
    <property type="entry name" value="CASP_dom"/>
    <property type="match status" value="1"/>
</dbReference>
<reference key="1">
    <citation type="journal article" date="2011" name="Science">
        <title>The Selaginella genome identifies genetic changes associated with the evolution of vascular plants.</title>
        <authorList>
            <person name="Banks J.A."/>
            <person name="Nishiyama T."/>
            <person name="Hasebe M."/>
            <person name="Bowman J.L."/>
            <person name="Gribskov M."/>
            <person name="dePamphilis C."/>
            <person name="Albert V.A."/>
            <person name="Aono N."/>
            <person name="Aoyama T."/>
            <person name="Ambrose B.A."/>
            <person name="Ashton N.W."/>
            <person name="Axtell M.J."/>
            <person name="Barker E."/>
            <person name="Barker M.S."/>
            <person name="Bennetzen J.L."/>
            <person name="Bonawitz N.D."/>
            <person name="Chapple C."/>
            <person name="Cheng C."/>
            <person name="Correa L.G."/>
            <person name="Dacre M."/>
            <person name="DeBarry J."/>
            <person name="Dreyer I."/>
            <person name="Elias M."/>
            <person name="Engstrom E.M."/>
            <person name="Estelle M."/>
            <person name="Feng L."/>
            <person name="Finet C."/>
            <person name="Floyd S.K."/>
            <person name="Frommer W.B."/>
            <person name="Fujita T."/>
            <person name="Gramzow L."/>
            <person name="Gutensohn M."/>
            <person name="Harholt J."/>
            <person name="Hattori M."/>
            <person name="Heyl A."/>
            <person name="Hirai T."/>
            <person name="Hiwatashi Y."/>
            <person name="Ishikawa M."/>
            <person name="Iwata M."/>
            <person name="Karol K.G."/>
            <person name="Koehler B."/>
            <person name="Kolukisaoglu U."/>
            <person name="Kubo M."/>
            <person name="Kurata T."/>
            <person name="Lalonde S."/>
            <person name="Li K."/>
            <person name="Li Y."/>
            <person name="Litt A."/>
            <person name="Lyons E."/>
            <person name="Manning G."/>
            <person name="Maruyama T."/>
            <person name="Michael T.P."/>
            <person name="Mikami K."/>
            <person name="Miyazaki S."/>
            <person name="Morinaga S."/>
            <person name="Murata T."/>
            <person name="Mueller-Roeber B."/>
            <person name="Nelson D.R."/>
            <person name="Obara M."/>
            <person name="Oguri Y."/>
            <person name="Olmstead R.G."/>
            <person name="Onodera N."/>
            <person name="Petersen B.L."/>
            <person name="Pils B."/>
            <person name="Prigge M."/>
            <person name="Rensing S.A."/>
            <person name="Riano-Pachon D.M."/>
            <person name="Roberts A.W."/>
            <person name="Sato Y."/>
            <person name="Scheller H.V."/>
            <person name="Schulz B."/>
            <person name="Schulz C."/>
            <person name="Shakirov E.V."/>
            <person name="Shibagaki N."/>
            <person name="Shinohara N."/>
            <person name="Shippen D.E."/>
            <person name="Soerensen I."/>
            <person name="Sotooka R."/>
            <person name="Sugimoto N."/>
            <person name="Sugita M."/>
            <person name="Sumikawa N."/>
            <person name="Tanurdzic M."/>
            <person name="Theissen G."/>
            <person name="Ulvskov P."/>
            <person name="Wakazuki S."/>
            <person name="Weng J.K."/>
            <person name="Willats W.W."/>
            <person name="Wipf D."/>
            <person name="Wolf P.G."/>
            <person name="Yang L."/>
            <person name="Zimmer A.D."/>
            <person name="Zhu Q."/>
            <person name="Mitros T."/>
            <person name="Hellsten U."/>
            <person name="Loque D."/>
            <person name="Otillar R."/>
            <person name="Salamov A."/>
            <person name="Schmutz J."/>
            <person name="Shapiro H."/>
            <person name="Lindquist E."/>
            <person name="Lucas S."/>
            <person name="Rokhsar D."/>
            <person name="Grigoriev I.V."/>
        </authorList>
    </citation>
    <scope>NUCLEOTIDE SEQUENCE [LARGE SCALE GENOMIC DNA]</scope>
</reference>
<reference key="2">
    <citation type="journal article" date="2014" name="Plant Physiol.">
        <title>Functional and evolutionary analysis of the CASPARIAN STRIP MEMBRANE DOMAIN PROTEIN family.</title>
        <authorList>
            <person name="Roppolo D."/>
            <person name="Boeckmann B."/>
            <person name="Pfister A."/>
            <person name="Boutet E."/>
            <person name="Rubio M.C."/>
            <person name="Denervaud-Tendon V."/>
            <person name="Vermeer J.E."/>
            <person name="Gheyselinck J."/>
            <person name="Xenarios I."/>
            <person name="Geldner N."/>
        </authorList>
    </citation>
    <scope>GENE FAMILY</scope>
    <scope>NOMENCLATURE</scope>
</reference>
<protein>
    <recommendedName>
        <fullName>CASP-like protein 2U8</fullName>
        <shortName>SmCASPL2U8</shortName>
    </recommendedName>
</protein>
<evidence type="ECO:0000250" key="1"/>
<evidence type="ECO:0000255" key="2"/>
<evidence type="ECO:0000305" key="3"/>
<proteinExistence type="inferred from homology"/>
<gene>
    <name type="ORF">SELMODRAFT_418756</name>
</gene>
<accession>D8S6A8</accession>
<name>CSPLE_SELML</name>
<sequence>MLELYEKRRALLLLRLAAMFLSLAALLITVLNREDGFFSINVFGSPQPILAKATADFTLVKGLKFFAGAMGIVAGYSFLQLAIAMASIFSGAPSILGGKRMAWLCFVGDMTASHLCAAAAAVSAQLAYLGKRGAPMWSAVCTYFSHYCLVFGLAVILAFLATLAALLVASISSYHLAYDVFCALYAMYKELVVDEVCSRSMKKTIPRIIKSGHQQRHHHRKPPLAPHCHGATSCKLCILQQQQWADLELHLSRAITLSAPSAVEMKIPPPPSVPSVVEMEMEIPSVSRVLEMETPCK</sequence>
<organism>
    <name type="scientific">Selaginella moellendorffii</name>
    <name type="common">Spikemoss</name>
    <dbReference type="NCBI Taxonomy" id="88036"/>
    <lineage>
        <taxon>Eukaryota</taxon>
        <taxon>Viridiplantae</taxon>
        <taxon>Streptophyta</taxon>
        <taxon>Embryophyta</taxon>
        <taxon>Tracheophyta</taxon>
        <taxon>Lycopodiopsida</taxon>
        <taxon>Selaginellales</taxon>
        <taxon>Selaginellaceae</taxon>
        <taxon>Selaginella</taxon>
    </lineage>
</organism>
<feature type="chain" id="PRO_0000418679" description="CASP-like protein 2U8">
    <location>
        <begin position="1"/>
        <end position="297"/>
    </location>
</feature>
<feature type="topological domain" description="Cytoplasmic" evidence="2">
    <location>
        <begin position="1"/>
        <end position="10"/>
    </location>
</feature>
<feature type="transmembrane region" description="Helical" evidence="2">
    <location>
        <begin position="11"/>
        <end position="31"/>
    </location>
</feature>
<feature type="topological domain" description="Extracellular" evidence="2">
    <location>
        <begin position="32"/>
        <end position="64"/>
    </location>
</feature>
<feature type="transmembrane region" description="Helical" evidence="2">
    <location>
        <begin position="65"/>
        <end position="85"/>
    </location>
</feature>
<feature type="topological domain" description="Cytoplasmic" evidence="2">
    <location>
        <begin position="86"/>
        <end position="101"/>
    </location>
</feature>
<feature type="transmembrane region" description="Helical" evidence="2">
    <location>
        <begin position="102"/>
        <end position="122"/>
    </location>
</feature>
<feature type="topological domain" description="Extracellular" evidence="2">
    <location>
        <begin position="123"/>
        <end position="148"/>
    </location>
</feature>
<feature type="transmembrane region" description="Helical" evidence="2">
    <location>
        <begin position="149"/>
        <end position="169"/>
    </location>
</feature>
<feature type="topological domain" description="Cytoplasmic" evidence="2">
    <location>
        <begin position="170"/>
        <end position="297"/>
    </location>
</feature>
<keyword id="KW-1003">Cell membrane</keyword>
<keyword id="KW-0472">Membrane</keyword>
<keyword id="KW-1185">Reference proteome</keyword>
<keyword id="KW-0812">Transmembrane</keyword>
<keyword id="KW-1133">Transmembrane helix</keyword>